<feature type="chain" id="PRO_0000215315" description="Short transient receptor potential channel 4">
    <location>
        <begin position="1"/>
        <end position="974"/>
    </location>
</feature>
<feature type="topological domain" description="Cytoplasmic" evidence="1">
    <location>
        <begin position="1"/>
        <end position="324"/>
    </location>
</feature>
<feature type="intramembrane region" description="Discontinuously helical; Name=Pre-S1" evidence="1">
    <location>
        <begin position="325"/>
        <end position="359"/>
    </location>
</feature>
<feature type="topological domain" description="Cytoplasmic" evidence="1">
    <location>
        <begin position="360"/>
        <end position="362"/>
    </location>
</feature>
<feature type="transmembrane region" description="Helical; Name=S1" evidence="1">
    <location>
        <begin position="363"/>
        <end position="383"/>
    </location>
</feature>
<feature type="topological domain" description="Extracellular" evidence="1">
    <location>
        <begin position="384"/>
        <end position="403"/>
    </location>
</feature>
<feature type="transmembrane region" description="Helical; Name=S2" evidence="1">
    <location>
        <begin position="404"/>
        <end position="418"/>
    </location>
</feature>
<feature type="topological domain" description="Cytoplasmic" evidence="1">
    <location>
        <begin position="419"/>
        <end position="432"/>
    </location>
</feature>
<feature type="transmembrane region" description="Helical; Name=S3" evidence="1">
    <location>
        <begin position="433"/>
        <end position="453"/>
    </location>
</feature>
<feature type="topological domain" description="Extracellular" evidence="1">
    <location>
        <begin position="454"/>
        <end position="475"/>
    </location>
</feature>
<feature type="transmembrane region" description="Helical; Name=S4" evidence="1">
    <location>
        <begin position="476"/>
        <end position="498"/>
    </location>
</feature>
<feature type="topological domain" description="Cytoplasmic" evidence="1">
    <location>
        <begin position="499"/>
        <end position="511"/>
    </location>
</feature>
<feature type="transmembrane region" description="Helical; Name=S5" evidence="1">
    <location>
        <begin position="512"/>
        <end position="534"/>
    </location>
</feature>
<feature type="topological domain" description="Extracellular" evidence="1">
    <location>
        <begin position="535"/>
        <end position="599"/>
    </location>
</feature>
<feature type="transmembrane region" description="Helical; Name=S6" evidence="1">
    <location>
        <begin position="600"/>
        <end position="620"/>
    </location>
</feature>
<feature type="topological domain" description="Cytoplasmic" evidence="1">
    <location>
        <begin position="621"/>
        <end position="974"/>
    </location>
</feature>
<feature type="repeat" description="ANK 1" evidence="1">
    <location>
        <begin position="29"/>
        <end position="60"/>
    </location>
</feature>
<feature type="repeat" description="ANK 2" evidence="1">
    <location>
        <begin position="71"/>
        <end position="93"/>
    </location>
</feature>
<feature type="repeat" description="ANK 3" evidence="1">
    <location>
        <begin position="96"/>
        <end position="118"/>
    </location>
</feature>
<feature type="repeat" description="ANK 4" evidence="1">
    <location>
        <begin position="141"/>
        <end position="165"/>
    </location>
</feature>
<feature type="region of interest" description="Multimerization domain" evidence="5">
    <location>
        <begin position="87"/>
        <end position="172"/>
    </location>
</feature>
<feature type="region of interest" description="Multimerization domain" evidence="5">
    <location>
        <begin position="254"/>
        <end position="304"/>
    </location>
</feature>
<feature type="region of interest" description="Interaction with ITPR1, ITPR2 and ITPR3" evidence="1">
    <location>
        <begin position="615"/>
        <end position="974"/>
    </location>
</feature>
<feature type="region of interest" description="Disordered" evidence="3">
    <location>
        <begin position="765"/>
        <end position="787"/>
    </location>
</feature>
<feature type="region of interest" description="PDZ-binding domain" evidence="1">
    <location>
        <begin position="972"/>
        <end position="974"/>
    </location>
</feature>
<feature type="coiled-coil region" evidence="2">
    <location>
        <begin position="223"/>
        <end position="260"/>
    </location>
</feature>
<feature type="compositionally biased region" description="Basic and acidic residues" evidence="3">
    <location>
        <begin position="773"/>
        <end position="784"/>
    </location>
</feature>
<feature type="binding site" evidence="1">
    <location>
        <position position="172"/>
    </location>
    <ligand>
        <name>Zn(2+)</name>
        <dbReference type="ChEBI" id="CHEBI:29105"/>
    </ligand>
</feature>
<feature type="binding site" evidence="1">
    <location>
        <position position="176"/>
    </location>
    <ligand>
        <name>Zn(2+)</name>
        <dbReference type="ChEBI" id="CHEBI:29105"/>
    </ligand>
</feature>
<feature type="binding site" evidence="1">
    <location>
        <position position="178"/>
    </location>
    <ligand>
        <name>Zn(2+)</name>
        <dbReference type="ChEBI" id="CHEBI:29105"/>
    </ligand>
</feature>
<feature type="binding site" evidence="1">
    <location>
        <position position="181"/>
    </location>
    <ligand>
        <name>Zn(2+)</name>
        <dbReference type="ChEBI" id="CHEBI:29105"/>
    </ligand>
</feature>
<feature type="binding site" evidence="1">
    <location>
        <position position="417"/>
    </location>
    <ligand>
        <name>Ca(2+)</name>
        <dbReference type="ChEBI" id="CHEBI:29108"/>
    </ligand>
</feature>
<feature type="binding site" evidence="1">
    <location>
        <position position="420"/>
    </location>
    <ligand>
        <name>Ca(2+)</name>
        <dbReference type="ChEBI" id="CHEBI:29108"/>
    </ligand>
</feature>
<feature type="binding site" evidence="1">
    <location>
        <position position="435"/>
    </location>
    <ligand>
        <name>Ca(2+)</name>
        <dbReference type="ChEBI" id="CHEBI:29108"/>
    </ligand>
</feature>
<feature type="binding site" evidence="1">
    <location>
        <position position="438"/>
    </location>
    <ligand>
        <name>Ca(2+)</name>
        <dbReference type="ChEBI" id="CHEBI:29108"/>
    </ligand>
</feature>
<feature type="modified residue" description="Phosphotyrosine; by FYN" evidence="1">
    <location>
        <position position="956"/>
    </location>
</feature>
<feature type="modified residue" description="Phosphotyrosine; by FYN" evidence="1">
    <location>
        <position position="969"/>
    </location>
</feature>
<feature type="disulfide bond" evidence="1">
    <location>
        <begin position="549"/>
        <end position="554"/>
    </location>
</feature>
<feature type="splice variant" id="VSP_006570" description="In isoform Beta." evidence="9 10 11 12">
    <location>
        <begin position="781"/>
        <end position="864"/>
    </location>
</feature>
<feature type="sequence conflict" description="In Ref. 3; AAF01469." evidence="13" ref="3">
    <original>E</original>
    <variation>K</variation>
    <location>
        <position position="780"/>
    </location>
</feature>
<feature type="sequence conflict" description="In Ref. 3; AAF01469." evidence="13" ref="3">
    <original>R</original>
    <variation>L</variation>
    <location>
        <position position="890"/>
    </location>
</feature>
<feature type="strand" evidence="14">
    <location>
        <begin position="17"/>
        <end position="19"/>
    </location>
</feature>
<feature type="helix" evidence="14">
    <location>
        <begin position="31"/>
        <end position="39"/>
    </location>
</feature>
<feature type="turn" evidence="14">
    <location>
        <begin position="40"/>
        <end position="43"/>
    </location>
</feature>
<feature type="helix" evidence="14">
    <location>
        <begin position="45"/>
        <end position="53"/>
    </location>
</feature>
<feature type="turn" evidence="14">
    <location>
        <begin position="54"/>
        <end position="56"/>
    </location>
</feature>
<feature type="strand" evidence="15">
    <location>
        <begin position="57"/>
        <end position="60"/>
    </location>
</feature>
<feature type="strand" evidence="14">
    <location>
        <begin position="68"/>
        <end position="70"/>
    </location>
</feature>
<feature type="strand" evidence="14">
    <location>
        <begin position="73"/>
        <end position="75"/>
    </location>
</feature>
<feature type="helix" evidence="14">
    <location>
        <begin position="76"/>
        <end position="79"/>
    </location>
</feature>
<feature type="helix" evidence="14">
    <location>
        <begin position="83"/>
        <end position="91"/>
    </location>
</feature>
<feature type="helix" evidence="14">
    <location>
        <begin position="99"/>
        <end position="105"/>
    </location>
</feature>
<feature type="helix" evidence="14">
    <location>
        <begin position="111"/>
        <end position="116"/>
    </location>
</feature>
<feature type="helix" evidence="14">
    <location>
        <begin position="145"/>
        <end position="151"/>
    </location>
</feature>
<feature type="helix" evidence="14">
    <location>
        <begin position="155"/>
        <end position="162"/>
    </location>
</feature>
<feature type="strand" evidence="14">
    <location>
        <begin position="167"/>
        <end position="169"/>
    </location>
</feature>
<feature type="helix" evidence="14">
    <location>
        <begin position="190"/>
        <end position="203"/>
    </location>
</feature>
<feature type="turn" evidence="14">
    <location>
        <begin position="206"/>
        <end position="210"/>
    </location>
</feature>
<feature type="helix" evidence="14">
    <location>
        <begin position="216"/>
        <end position="231"/>
    </location>
</feature>
<feature type="helix" evidence="14">
    <location>
        <begin position="238"/>
        <end position="257"/>
    </location>
</feature>
<feature type="helix" evidence="14">
    <location>
        <begin position="264"/>
        <end position="268"/>
    </location>
</feature>
<feature type="helix" evidence="14">
    <location>
        <begin position="287"/>
        <end position="294"/>
    </location>
</feature>
<feature type="turn" evidence="14">
    <location>
        <begin position="298"/>
        <end position="300"/>
    </location>
</feature>
<feature type="helix" evidence="14">
    <location>
        <begin position="305"/>
        <end position="314"/>
    </location>
</feature>
<feature type="helix" evidence="14">
    <location>
        <begin position="321"/>
        <end position="323"/>
    </location>
</feature>
<feature type="helix" evidence="14">
    <location>
        <begin position="326"/>
        <end position="338"/>
    </location>
</feature>
<feature type="helix" evidence="14">
    <location>
        <begin position="340"/>
        <end position="345"/>
    </location>
</feature>
<feature type="turn" evidence="14">
    <location>
        <begin position="346"/>
        <end position="348"/>
    </location>
</feature>
<feature type="strand" evidence="14">
    <location>
        <begin position="351"/>
        <end position="353"/>
    </location>
</feature>
<feature type="turn" evidence="14">
    <location>
        <begin position="354"/>
        <end position="360"/>
    </location>
</feature>
<feature type="helix" evidence="14">
    <location>
        <begin position="362"/>
        <end position="383"/>
    </location>
</feature>
<feature type="helix" evidence="14">
    <location>
        <begin position="401"/>
        <end position="422"/>
    </location>
</feature>
<feature type="helix" evidence="14">
    <location>
        <begin position="427"/>
        <end position="431"/>
    </location>
</feature>
<feature type="helix" evidence="14">
    <location>
        <begin position="433"/>
        <end position="456"/>
    </location>
</feature>
<feature type="helix" evidence="14">
    <location>
        <begin position="473"/>
        <end position="489"/>
    </location>
</feature>
<feature type="helix" evidence="14">
    <location>
        <begin position="491"/>
        <end position="498"/>
    </location>
</feature>
<feature type="turn" evidence="14">
    <location>
        <begin position="500"/>
        <end position="502"/>
    </location>
</feature>
<feature type="helix" evidence="14">
    <location>
        <begin position="503"/>
        <end position="517"/>
    </location>
</feature>
<feature type="helix" evidence="14">
    <location>
        <begin position="520"/>
        <end position="541"/>
    </location>
</feature>
<feature type="strand" evidence="14">
    <location>
        <begin position="546"/>
        <end position="548"/>
    </location>
</feature>
<feature type="strand" evidence="14">
    <location>
        <begin position="551"/>
        <end position="556"/>
    </location>
</feature>
<feature type="strand" evidence="14">
    <location>
        <begin position="560"/>
        <end position="563"/>
    </location>
</feature>
<feature type="helix" evidence="14">
    <location>
        <begin position="564"/>
        <end position="573"/>
    </location>
</feature>
<feature type="turn" evidence="14">
    <location>
        <begin position="574"/>
        <end position="578"/>
    </location>
</feature>
<feature type="helix" evidence="14">
    <location>
        <begin position="581"/>
        <end position="584"/>
    </location>
</feature>
<feature type="helix" evidence="14">
    <location>
        <begin position="591"/>
        <end position="609"/>
    </location>
</feature>
<feature type="helix" evidence="14">
    <location>
        <begin position="612"/>
        <end position="627"/>
    </location>
</feature>
<feature type="helix" evidence="14">
    <location>
        <begin position="635"/>
        <end position="644"/>
    </location>
</feature>
<feature type="strand" evidence="14">
    <location>
        <begin position="646"/>
        <end position="650"/>
    </location>
</feature>
<feature type="helix" evidence="14">
    <location>
        <begin position="655"/>
        <end position="657"/>
    </location>
</feature>
<feature type="strand" evidence="15">
    <location>
        <begin position="658"/>
        <end position="661"/>
    </location>
</feature>
<feature type="helix" evidence="14">
    <location>
        <begin position="693"/>
        <end position="724"/>
    </location>
</feature>
<feature type="helix" evidence="14">
    <location>
        <begin position="733"/>
        <end position="754"/>
    </location>
</feature>
<feature type="helix" evidence="16">
    <location>
        <begin position="792"/>
        <end position="799"/>
    </location>
</feature>
<feature type="helix" evidence="16">
    <location>
        <begin position="801"/>
        <end position="807"/>
    </location>
</feature>
<name>TRPC4_MOUSE</name>
<keyword id="KW-0002">3D-structure</keyword>
<keyword id="KW-0025">Alternative splicing</keyword>
<keyword id="KW-0040">ANK repeat</keyword>
<keyword id="KW-0106">Calcium</keyword>
<keyword id="KW-0107">Calcium channel</keyword>
<keyword id="KW-0109">Calcium transport</keyword>
<keyword id="KW-1003">Cell membrane</keyword>
<keyword id="KW-0175">Coiled coil</keyword>
<keyword id="KW-1015">Disulfide bond</keyword>
<keyword id="KW-0407">Ion channel</keyword>
<keyword id="KW-0406">Ion transport</keyword>
<keyword id="KW-0472">Membrane</keyword>
<keyword id="KW-0479">Metal-binding</keyword>
<keyword id="KW-0597">Phosphoprotein</keyword>
<keyword id="KW-1185">Reference proteome</keyword>
<keyword id="KW-0677">Repeat</keyword>
<keyword id="KW-0812">Transmembrane</keyword>
<keyword id="KW-1133">Transmembrane helix</keyword>
<keyword id="KW-0813">Transport</keyword>
<keyword id="KW-0862">Zinc</keyword>
<organism>
    <name type="scientific">Mus musculus</name>
    <name type="common">Mouse</name>
    <dbReference type="NCBI Taxonomy" id="10090"/>
    <lineage>
        <taxon>Eukaryota</taxon>
        <taxon>Metazoa</taxon>
        <taxon>Chordata</taxon>
        <taxon>Craniata</taxon>
        <taxon>Vertebrata</taxon>
        <taxon>Euteleostomi</taxon>
        <taxon>Mammalia</taxon>
        <taxon>Eutheria</taxon>
        <taxon>Euarchontoglires</taxon>
        <taxon>Glires</taxon>
        <taxon>Rodentia</taxon>
        <taxon>Myomorpha</taxon>
        <taxon>Muroidea</taxon>
        <taxon>Muridae</taxon>
        <taxon>Murinae</taxon>
        <taxon>Mus</taxon>
        <taxon>Mus</taxon>
    </lineage>
</organism>
<dbReference type="EMBL" id="AF011543">
    <property type="protein sequence ID" value="AAD10167.1"/>
    <property type="molecule type" value="mRNA"/>
</dbReference>
<dbReference type="EMBL" id="U50922">
    <property type="protein sequence ID" value="AAC05179.1"/>
    <property type="molecule type" value="mRNA"/>
</dbReference>
<dbReference type="EMBL" id="AF190646">
    <property type="protein sequence ID" value="AAF01469.1"/>
    <property type="molecule type" value="mRNA"/>
</dbReference>
<dbReference type="EMBL" id="U50921">
    <property type="protein sequence ID" value="AAC05178.1"/>
    <property type="molecule type" value="mRNA"/>
</dbReference>
<dbReference type="EMBL" id="AF019663">
    <property type="protein sequence ID" value="AAD10168.1"/>
    <property type="molecule type" value="mRNA"/>
</dbReference>
<dbReference type="EMBL" id="X90697">
    <property type="protein sequence ID" value="CAA62230.1"/>
    <property type="molecule type" value="mRNA"/>
</dbReference>
<dbReference type="CCDS" id="CCDS17350.1">
    <molecule id="Q9QUQ5-1"/>
</dbReference>
<dbReference type="CCDS" id="CCDS79904.1">
    <molecule id="Q9QUQ5-2"/>
</dbReference>
<dbReference type="PIR" id="S59128">
    <property type="entry name" value="S59128"/>
</dbReference>
<dbReference type="RefSeq" id="NP_001240611.1">
    <molecule id="Q9QUQ5-2"/>
    <property type="nucleotide sequence ID" value="NM_001253682.2"/>
</dbReference>
<dbReference type="RefSeq" id="NP_001415637.1">
    <molecule id="Q9QUQ5-1"/>
    <property type="nucleotide sequence ID" value="NM_001428708.1"/>
</dbReference>
<dbReference type="RefSeq" id="NP_058680.1">
    <molecule id="Q9QUQ5-1"/>
    <property type="nucleotide sequence ID" value="NM_016984.4"/>
</dbReference>
<dbReference type="RefSeq" id="XP_006501359.1">
    <property type="nucleotide sequence ID" value="XM_006501296.3"/>
</dbReference>
<dbReference type="PDB" id="5Z96">
    <property type="method" value="EM"/>
    <property type="resolution" value="3.28 A"/>
    <property type="chains" value="A/B/C/D=1-755"/>
</dbReference>
<dbReference type="PDB" id="6JZO">
    <property type="method" value="EM"/>
    <property type="resolution" value="3.28 A"/>
    <property type="chains" value="A/B/C/D=1-755"/>
</dbReference>
<dbReference type="PDB" id="7CQP">
    <property type="method" value="X-ray"/>
    <property type="resolution" value="1.90 A"/>
    <property type="chains" value="C=785-812"/>
</dbReference>
<dbReference type="PDBsum" id="5Z96"/>
<dbReference type="PDBsum" id="6JZO"/>
<dbReference type="PDBsum" id="7CQP"/>
<dbReference type="EMDB" id="EMD-6901"/>
<dbReference type="EMDB" id="EMD-9898"/>
<dbReference type="SMR" id="Q9QUQ5"/>
<dbReference type="BioGRID" id="204330">
    <property type="interactions" value="6"/>
</dbReference>
<dbReference type="DIP" id="DIP-40848N"/>
<dbReference type="FunCoup" id="Q9QUQ5">
    <property type="interactions" value="90"/>
</dbReference>
<dbReference type="IntAct" id="Q9QUQ5">
    <property type="interactions" value="5"/>
</dbReference>
<dbReference type="MINT" id="Q9QUQ5"/>
<dbReference type="STRING" id="10090.ENSMUSP00000029311"/>
<dbReference type="BindingDB" id="Q9QUQ5"/>
<dbReference type="ChEMBL" id="CHEMBL1741219"/>
<dbReference type="DrugCentral" id="Q9QUQ5"/>
<dbReference type="GuidetoPHARMACOLOGY" id="489"/>
<dbReference type="iPTMnet" id="Q9QUQ5"/>
<dbReference type="PhosphoSitePlus" id="Q9QUQ5"/>
<dbReference type="SwissPalm" id="Q9QUQ5"/>
<dbReference type="PaxDb" id="10090-ENSMUSP00000029311"/>
<dbReference type="ProteomicsDB" id="300131">
    <molecule id="Q9QUQ5-1"/>
</dbReference>
<dbReference type="ProteomicsDB" id="300132">
    <molecule id="Q9QUQ5-2"/>
</dbReference>
<dbReference type="Antibodypedia" id="8254">
    <property type="antibodies" value="307 antibodies from 33 providers"/>
</dbReference>
<dbReference type="DNASU" id="22066"/>
<dbReference type="Ensembl" id="ENSMUST00000029311.11">
    <molecule id="Q9QUQ5-1"/>
    <property type="protein sequence ID" value="ENSMUSP00000029311.7"/>
    <property type="gene ID" value="ENSMUSG00000027748.12"/>
</dbReference>
<dbReference type="Ensembl" id="ENSMUST00000200048.5">
    <molecule id="Q9QUQ5-2"/>
    <property type="protein sequence ID" value="ENSMUSP00000143593.2"/>
    <property type="gene ID" value="ENSMUSG00000027748.12"/>
</dbReference>
<dbReference type="GeneID" id="22066"/>
<dbReference type="KEGG" id="mmu:22066"/>
<dbReference type="UCSC" id="uc008pfd.2">
    <molecule id="Q9QUQ5-1"/>
    <property type="organism name" value="mouse"/>
</dbReference>
<dbReference type="UCSC" id="uc008pff.2">
    <molecule id="Q9QUQ5-2"/>
    <property type="organism name" value="mouse"/>
</dbReference>
<dbReference type="AGR" id="MGI:109525"/>
<dbReference type="CTD" id="7223"/>
<dbReference type="MGI" id="MGI:109525">
    <property type="gene designation" value="Trpc4"/>
</dbReference>
<dbReference type="VEuPathDB" id="HostDB:ENSMUSG00000027748"/>
<dbReference type="eggNOG" id="KOG3609">
    <property type="taxonomic scope" value="Eukaryota"/>
</dbReference>
<dbReference type="GeneTree" id="ENSGT01060000248594"/>
<dbReference type="InParanoid" id="Q9QUQ5"/>
<dbReference type="OMA" id="KGIRCAE"/>
<dbReference type="OrthoDB" id="2373987at2759"/>
<dbReference type="PhylomeDB" id="Q9QUQ5"/>
<dbReference type="TreeFam" id="TF313147"/>
<dbReference type="Reactome" id="R-MMU-3295583">
    <property type="pathway name" value="TRP channels"/>
</dbReference>
<dbReference type="BioGRID-ORCS" id="22066">
    <property type="hits" value="1 hit in 78 CRISPR screens"/>
</dbReference>
<dbReference type="ChiTaRS" id="Trpc4">
    <property type="organism name" value="mouse"/>
</dbReference>
<dbReference type="PRO" id="PR:Q9QUQ5"/>
<dbReference type="Proteomes" id="UP000000589">
    <property type="component" value="Chromosome 3"/>
</dbReference>
<dbReference type="RNAct" id="Q9QUQ5">
    <property type="molecule type" value="protein"/>
</dbReference>
<dbReference type="Bgee" id="ENSMUSG00000027748">
    <property type="expression patterns" value="Expressed in lateral septal nucleus and 97 other cell types or tissues"/>
</dbReference>
<dbReference type="ExpressionAtlas" id="Q9QUQ5">
    <property type="expression patterns" value="baseline and differential"/>
</dbReference>
<dbReference type="GO" id="GO:0016323">
    <property type="term" value="C:basolateral plasma membrane"/>
    <property type="evidence" value="ECO:0007669"/>
    <property type="project" value="Ensembl"/>
</dbReference>
<dbReference type="GO" id="GO:0034704">
    <property type="term" value="C:calcium channel complex"/>
    <property type="evidence" value="ECO:0007669"/>
    <property type="project" value="Ensembl"/>
</dbReference>
<dbReference type="GO" id="GO:0005901">
    <property type="term" value="C:caveola"/>
    <property type="evidence" value="ECO:0000314"/>
    <property type="project" value="MGI"/>
</dbReference>
<dbReference type="GO" id="GO:0009986">
    <property type="term" value="C:cell surface"/>
    <property type="evidence" value="ECO:0007669"/>
    <property type="project" value="Ensembl"/>
</dbReference>
<dbReference type="GO" id="GO:0005911">
    <property type="term" value="C:cell-cell junction"/>
    <property type="evidence" value="ECO:0007669"/>
    <property type="project" value="Ensembl"/>
</dbReference>
<dbReference type="GO" id="GO:0030863">
    <property type="term" value="C:cortical cytoskeleton"/>
    <property type="evidence" value="ECO:0007669"/>
    <property type="project" value="Ensembl"/>
</dbReference>
<dbReference type="GO" id="GO:0045121">
    <property type="term" value="C:membrane raft"/>
    <property type="evidence" value="ECO:0000314"/>
    <property type="project" value="MGI"/>
</dbReference>
<dbReference type="GO" id="GO:0005886">
    <property type="term" value="C:plasma membrane"/>
    <property type="evidence" value="ECO:0000314"/>
    <property type="project" value="BHF-UCL"/>
</dbReference>
<dbReference type="GO" id="GO:0032991">
    <property type="term" value="C:protein-containing complex"/>
    <property type="evidence" value="ECO:0000353"/>
    <property type="project" value="MGI"/>
</dbReference>
<dbReference type="GO" id="GO:0008013">
    <property type="term" value="F:beta-catenin binding"/>
    <property type="evidence" value="ECO:0007669"/>
    <property type="project" value="Ensembl"/>
</dbReference>
<dbReference type="GO" id="GO:0045296">
    <property type="term" value="F:cadherin binding"/>
    <property type="evidence" value="ECO:0007669"/>
    <property type="project" value="Ensembl"/>
</dbReference>
<dbReference type="GO" id="GO:0070679">
    <property type="term" value="F:inositol 1,4,5 trisphosphate binding"/>
    <property type="evidence" value="ECO:0000314"/>
    <property type="project" value="BHF-UCL"/>
</dbReference>
<dbReference type="GO" id="GO:0015279">
    <property type="term" value="F:store-operated calcium channel activity"/>
    <property type="evidence" value="ECO:0000315"/>
    <property type="project" value="MGI"/>
</dbReference>
<dbReference type="GO" id="GO:0070509">
    <property type="term" value="P:calcium ion import"/>
    <property type="evidence" value="ECO:0007669"/>
    <property type="project" value="Ensembl"/>
</dbReference>
<dbReference type="GO" id="GO:0014051">
    <property type="term" value="P:gamma-aminobutyric acid secretion"/>
    <property type="evidence" value="ECO:0000315"/>
    <property type="project" value="MGI"/>
</dbReference>
<dbReference type="GO" id="GO:0048709">
    <property type="term" value="P:oligodendrocyte differentiation"/>
    <property type="evidence" value="ECO:0000315"/>
    <property type="project" value="MGI"/>
</dbReference>
<dbReference type="FunFam" id="1.25.40.20:FF:000023">
    <property type="entry name" value="short transient receptor potential channel 4 isoform X1"/>
    <property type="match status" value="1"/>
</dbReference>
<dbReference type="FunFam" id="1.10.287.70:FF:000266">
    <property type="entry name" value="Transient receptor potential cation channel subfamily c member 1"/>
    <property type="match status" value="1"/>
</dbReference>
<dbReference type="Gene3D" id="1.25.40.20">
    <property type="entry name" value="Ankyrin repeat-containing domain"/>
    <property type="match status" value="1"/>
</dbReference>
<dbReference type="InterPro" id="IPR002110">
    <property type="entry name" value="Ankyrin_rpt"/>
</dbReference>
<dbReference type="InterPro" id="IPR036770">
    <property type="entry name" value="Ankyrin_rpt-contain_sf"/>
</dbReference>
<dbReference type="InterPro" id="IPR005821">
    <property type="entry name" value="Ion_trans_dom"/>
</dbReference>
<dbReference type="InterPro" id="IPR013555">
    <property type="entry name" value="TRP_dom"/>
</dbReference>
<dbReference type="InterPro" id="IPR005460">
    <property type="entry name" value="TRPC4_channel"/>
</dbReference>
<dbReference type="InterPro" id="IPR002153">
    <property type="entry name" value="TRPC_channel"/>
</dbReference>
<dbReference type="NCBIfam" id="TIGR00870">
    <property type="entry name" value="trp"/>
    <property type="match status" value="1"/>
</dbReference>
<dbReference type="PANTHER" id="PTHR10117:SF25">
    <property type="entry name" value="SHORT TRANSIENT RECEPTOR POTENTIAL CHANNEL 4"/>
    <property type="match status" value="1"/>
</dbReference>
<dbReference type="PANTHER" id="PTHR10117">
    <property type="entry name" value="TRANSIENT RECEPTOR POTENTIAL CHANNEL"/>
    <property type="match status" value="1"/>
</dbReference>
<dbReference type="Pfam" id="PF00023">
    <property type="entry name" value="Ank"/>
    <property type="match status" value="1"/>
</dbReference>
<dbReference type="Pfam" id="PF12796">
    <property type="entry name" value="Ank_2"/>
    <property type="match status" value="1"/>
</dbReference>
<dbReference type="Pfam" id="PF00520">
    <property type="entry name" value="Ion_trans"/>
    <property type="match status" value="1"/>
</dbReference>
<dbReference type="Pfam" id="PF08344">
    <property type="entry name" value="TRP_2"/>
    <property type="match status" value="1"/>
</dbReference>
<dbReference type="PRINTS" id="PR01097">
    <property type="entry name" value="TRNSRECEPTRP"/>
</dbReference>
<dbReference type="PRINTS" id="PR01645">
    <property type="entry name" value="TRPCHANNEL4"/>
</dbReference>
<dbReference type="SMART" id="SM00248">
    <property type="entry name" value="ANK"/>
    <property type="match status" value="2"/>
</dbReference>
<dbReference type="SMART" id="SM01420">
    <property type="entry name" value="TRP_2"/>
    <property type="match status" value="1"/>
</dbReference>
<dbReference type="SUPFAM" id="SSF48403">
    <property type="entry name" value="Ankyrin repeat"/>
    <property type="match status" value="1"/>
</dbReference>
<dbReference type="PROSITE" id="PS50297">
    <property type="entry name" value="ANK_REP_REGION"/>
    <property type="match status" value="1"/>
</dbReference>
<dbReference type="PROSITE" id="PS50088">
    <property type="entry name" value="ANK_REPEAT"/>
    <property type="match status" value="1"/>
</dbReference>
<accession>Q9QUQ5</accession>
<accession>Q62350</accession>
<accession>Q9QUQ9</accession>
<accession>Q9QZC0</accession>
<comment type="function">
    <text evidence="1">Forms a receptor-activated non-selective calcium permeant cation channel (By similarity). Acts as a cell-cell contact-dependent endothelial calcium entry channel (By similarity). Forms a homomeric ion channel or a heteromeric ion channel with TRPC1; the heteromeric ion channel has reduced calcium permeability compared to the homomeric channel (By similarity). Also permeable to monovalent ions including sodium, lithium and cesium ions (By similarity).</text>
</comment>
<comment type="catalytic activity">
    <reaction evidence="4">
        <text>Ca(2+)(in) = Ca(2+)(out)</text>
        <dbReference type="Rhea" id="RHEA:29671"/>
        <dbReference type="ChEBI" id="CHEBI:29108"/>
    </reaction>
</comment>
<comment type="catalytic activity">
    <reaction evidence="1">
        <text>Na(+)(in) = Na(+)(out)</text>
        <dbReference type="Rhea" id="RHEA:34963"/>
        <dbReference type="ChEBI" id="CHEBI:29101"/>
    </reaction>
</comment>
<comment type="catalytic activity">
    <reaction evidence="1">
        <text>Li(+)(in) = Li(+)(out)</text>
        <dbReference type="Rhea" id="RHEA:78551"/>
        <dbReference type="ChEBI" id="CHEBI:49713"/>
    </reaction>
</comment>
<comment type="catalytic activity">
    <reaction evidence="1">
        <text>Cs(+)(in) = Cs(+)(out)</text>
        <dbReference type="Rhea" id="RHEA:78555"/>
        <dbReference type="ChEBI" id="CHEBI:49547"/>
    </reaction>
</comment>
<comment type="activity regulation">
    <text evidence="1 4">May be operated by a phosphatidylinositol second messenger system activated by receptor tyrosine kinases or G-protein coupled receptors (By similarity). May be activated by intracellular calcium store depletion (PubMed:11175743).</text>
</comment>
<comment type="subunit">
    <text evidence="1 5 6 7">Homotetramer (PubMed:19070363). Heterotetramer with TRPC1 and/or TRPC5 (By similarity). Forms a heteromeric ion channel with TRPC1, with a 1:3 TRPC1:TRPC4 stoichiometry (By similarity). Interacts with TRPC4AP (PubMed:20458742). Isoform alpha but not isoform beta interacts with ITPR1, ITPR2 and ITPR3 (By similarity). Interacts with NHERF1 (By similarity). Interacts with MX1 and RNF24 (By similarity). Interacts (via CIRB domain) with SESTD1 (via the spectrin 1 repeat) and SPTBN5 (via C-terminus) (By similarity). Interacts with CDH5 and CTNNB1 (By similarity). Interacts (via protein 4.1-binding domain) with EPB41L2 (By similarity). Interacts with PLSCR1 (PubMed:32110987).</text>
</comment>
<comment type="subcellular location">
    <subcellularLocation>
        <location evidence="1">Cell membrane</location>
        <topology evidence="1">Multi-pass membrane protein</topology>
    </subcellularLocation>
</comment>
<comment type="alternative products">
    <event type="alternative splicing"/>
    <isoform>
        <id>Q9QUQ5-1</id>
        <name>Alpha</name>
        <sequence type="displayed"/>
    </isoform>
    <isoform>
        <id>Q9QUQ5-2</id>
        <name>Beta</name>
        <sequence type="described" ref="VSP_006570"/>
    </isoform>
</comment>
<comment type="tissue specificity">
    <text evidence="8">Abundantly expressed in brain (hippocampal CA1 pyramidal neurons, dentate gyrus granule cells, and cerebral cortical neurons, and in the septal nuclei and the mitral layer of olfactory bulb). Lower levels are detected in other tissues.</text>
</comment>
<comment type="similarity">
    <text evidence="13">Belongs to the transient receptor (TC 1.A.4) family. STrpC subfamily. TRPC4 sub-subfamily.</text>
</comment>
<sequence length="974" mass="111575">MAQFYYKRNVNAPYRDRIPLRIVRAESELSPSEKAYLNAVEKGDYASVKKSLEEAEIYFKININCIDPLGRTALLIAIENENLELIELLLSFNVYVGDALLHAIRKEVVGAVELLLNHKKPSGEKQVPPILLDKQFSEFTPDITPIILAAHTNNYEIIKLLVQKGVSVPRPHEVRCNCVECVSSSDVDSLRHSRSRLNIYKALASPSLIALSSEDPFLTAFQLSWELQELSKVENEFKSEYEELSRQCKQFAKDLLDQTRSSRELEIILNYRDDNSLIEEQSGNDLARLKLAIKYRQKEFVAQPNCQQLLASRWYDEFPGWRRRHWAVKMVTCFIIGLLFPVFSVCYLIAPKSPLGLFIRKPFIKFICHTASYLTFLFLLLLASQHIDRSDLNRQGPPPTIVEWMILPWVLGFIWGEIKQMWDGGLQDYIHDWWNLMDFVMNSLYLATISLKIVAFVKYSALNPRESWDMWHPTLVAEALFAIANIFSSLRLISLFTANSHLGPLQISLGRMLLDILKFLFIYCLVLLAFANGLNQLYFYYEETKGLSCKGIRCEKQNNAFSTLFETLQSLFWSIFGLINLYVTNVKAQHEFTEFVGATMFGTYNVISLVVLLNMLIAMMNNSYQLIADHADIEWKFARTKLWMSYFEEGGTLPTPFNVIPSPKSLWYLVKWIWTHLCKKKMRRKPESFGTIGRRAADNLRRHHQYQEVMRNLVKRYVAAMIREAKTEEGLTEENVKELKQDISSFRFEVLGLLRGSKLSTIQSANAASSADSDEKSQSEGNGKDKRKNLSLFDLTTLIHPRSAAIASERHNLSNGSALVVQEPPREKQRKVNFVADIKNFGLFHRRSKQNAAEQNANQIFSVSEEITRQQAAGALERNIELESKGLASRGDRSIPGLNEQCVLVDHRERNTDTLGLQVGKRVCSTFKSEKVVVEDTVPIIPKEKHAHEEDSSIDYDLSPTDTAAHEDYVTTRL</sequence>
<evidence type="ECO:0000250" key="1">
    <source>
        <dbReference type="UniProtKB" id="Q9UBN4"/>
    </source>
</evidence>
<evidence type="ECO:0000255" key="2"/>
<evidence type="ECO:0000256" key="3">
    <source>
        <dbReference type="SAM" id="MobiDB-lite"/>
    </source>
</evidence>
<evidence type="ECO:0000269" key="4">
    <source>
    </source>
</evidence>
<evidence type="ECO:0000269" key="5">
    <source>
    </source>
</evidence>
<evidence type="ECO:0000269" key="6">
    <source>
    </source>
</evidence>
<evidence type="ECO:0000269" key="7">
    <source>
    </source>
</evidence>
<evidence type="ECO:0000269" key="8">
    <source>
    </source>
</evidence>
<evidence type="ECO:0000303" key="9">
    <source>
    </source>
</evidence>
<evidence type="ECO:0000303" key="10">
    <source>
    </source>
</evidence>
<evidence type="ECO:0000303" key="11">
    <source ref="1"/>
</evidence>
<evidence type="ECO:0000303" key="12">
    <source ref="2"/>
</evidence>
<evidence type="ECO:0000305" key="13"/>
<evidence type="ECO:0007829" key="14">
    <source>
        <dbReference type="PDB" id="5Z96"/>
    </source>
</evidence>
<evidence type="ECO:0007829" key="15">
    <source>
        <dbReference type="PDB" id="6JZO"/>
    </source>
</evidence>
<evidence type="ECO:0007829" key="16">
    <source>
        <dbReference type="PDB" id="7CQP"/>
    </source>
</evidence>
<proteinExistence type="evidence at protein level"/>
<reference key="1">
    <citation type="submission" date="1997-08" db="EMBL/GenBank/DDBJ databases">
        <title>Trp4 is involved in capacitative calcium entry in murine cells.</title>
        <authorList>
            <person name="Zhu X."/>
            <person name="Boulay G."/>
            <person name="Jiang M."/>
            <person name="Birnbaumer L."/>
        </authorList>
    </citation>
    <scope>NUCLEOTIDE SEQUENCE [MRNA] (ISOFORMS ALPHA AND BETA)</scope>
    <source>
        <tissue>Brain</tissue>
    </source>
</reference>
<reference key="2">
    <citation type="submission" date="1996-03" db="EMBL/GenBank/DDBJ databases">
        <authorList>
            <person name="Qian F."/>
            <person name="Philipson L.H."/>
        </authorList>
    </citation>
    <scope>NUCLEOTIDE SEQUENCE [MRNA] (ISOFORMS ALPHA AND BETA)</scope>
</reference>
<reference key="3">
    <citation type="journal article" date="1998" name="NeuroReport">
        <title>Differential distribution of TRP Ca2+ channel isoforms in mouse brain.</title>
        <authorList>
            <person name="Mori Y."/>
            <person name="Takada N."/>
            <person name="Okada T."/>
            <person name="Wakamori M."/>
            <person name="Imoto K."/>
            <person name="Wanifuchi H."/>
            <person name="Oka H."/>
            <person name="Oba A."/>
            <person name="Ikenaka K."/>
            <person name="Kurosaki T."/>
        </authorList>
    </citation>
    <scope>NUCLEOTIDE SEQUENCE [MRNA] (ISOFORMS ALPHA AND BETA)</scope>
    <scope>TISSUE SPECIFICITY</scope>
    <source>
        <tissue>Brain</tissue>
    </source>
</reference>
<reference key="4">
    <citation type="journal article" date="2000" name="J. Biol. Chem.">
        <title>Association of mammalian trp4 and phospholipase C isozymes with a PDZ domain-containing protein, NHERF.</title>
        <authorList>
            <person name="Tang Y."/>
            <person name="Tang J."/>
            <person name="Chen Z."/>
            <person name="Trost C."/>
            <person name="Flockerzi V."/>
            <person name="Li M."/>
            <person name="Ramesh V."/>
            <person name="Zhu M.X."/>
        </authorList>
    </citation>
    <scope>NUCLEOTIDE SEQUENCE [MRNA] (ISOFORMS ALPHA AND BETA)</scope>
</reference>
<reference key="5">
    <citation type="journal article" date="1995" name="Biochem. J.">
        <title>Putative capacitative calcium entry channels: expression of Drosophila trp and evidence for the existence of vertebrate homologues.</title>
        <authorList>
            <person name="Petersen C.C.H."/>
            <person name="Berridge M.J."/>
            <person name="Borgese M.F."/>
            <person name="Bennett D.L."/>
        </authorList>
    </citation>
    <scope>NUCLEOTIDE SEQUENCE [MRNA] OF 505-642</scope>
    <source>
        <tissue>Brain</tissue>
    </source>
</reference>
<reference key="6">
    <citation type="journal article" date="2001" name="Nat. Cell Biol.">
        <title>Lack of an endothelial store-operated Ca2+ current impairs agonist-dependent vasorelaxation in TRP4-/- mice.</title>
        <authorList>
            <person name="Freichel M."/>
            <person name="Suh S.H."/>
            <person name="Pfeifer A."/>
            <person name="Schweig U."/>
            <person name="Trost C."/>
            <person name="Weissgerber P."/>
            <person name="Biel M."/>
            <person name="Philipp S."/>
            <person name="Freise D."/>
            <person name="Droogmans G."/>
            <person name="Hofmann F."/>
            <person name="Flockerzi V."/>
            <person name="Nilius B."/>
        </authorList>
    </citation>
    <scope>FUNCTION</scope>
    <scope>TRANSPORTER ACTIVITY</scope>
</reference>
<reference key="7">
    <citation type="journal article" date="2009" name="Cell Calcium">
        <title>The self-association of two N-terminal interaction domains plays an important role in the tetramerization of TRPC4.</title>
        <authorList>
            <person name="Lepage P.K."/>
            <person name="Lussier M.P."/>
            <person name="McDuff F.O."/>
            <person name="Lavigne P."/>
            <person name="Boulay G."/>
        </authorList>
    </citation>
    <scope>SUBUNIT</scope>
    <scope>REGION MULTIMERIZATION DOMAIN</scope>
</reference>
<reference key="8">
    <citation type="journal article" date="2010" name="J. Cell. Physiol.">
        <title>TRUSS, TNF-R1, and TRPC ion channels synergistically reverse endoplasmic reticulum Ca2+ storage reduction in response to m1 muscarinic acetylcholine receptor signaling.</title>
        <authorList>
            <person name="Mace K.E."/>
            <person name="Lussier M.P."/>
            <person name="Boulay G."/>
            <person name="Terry-Powers J.L."/>
            <person name="Parfrey H."/>
            <person name="Perraud A.L."/>
            <person name="Riches D.W.H."/>
        </authorList>
    </citation>
    <scope>INTERACTION WITH TRPC4AP</scope>
</reference>
<reference key="9">
    <citation type="journal article" date="2020" name="Cells">
        <title>Transient Receptor Potential Canonical 5-Scramblase Signaling Complex Mediates Neuronal Phosphatidylserine Externalization and Apoptosis.</title>
        <authorList>
            <person name="Guo J."/>
            <person name="Li J."/>
            <person name="Xia L."/>
            <person name="Wang Y."/>
            <person name="Zhu J."/>
            <person name="Du J."/>
            <person name="Lu Y."/>
            <person name="Liu G."/>
            <person name="Yao X."/>
            <person name="Shen B."/>
        </authorList>
    </citation>
    <scope>INTERACTION WITH PLSCR1</scope>
</reference>
<protein>
    <recommendedName>
        <fullName>Short transient receptor potential channel 4</fullName>
        <shortName>TrpC4</shortName>
    </recommendedName>
    <alternativeName>
        <fullName>Capacitative calcium entry channel Trp4</fullName>
    </alternativeName>
    <alternativeName>
        <fullName>Receptor-activated cation channel TRP4</fullName>
    </alternativeName>
</protein>
<gene>
    <name type="primary">Trpc4</name>
    <name type="synonym">Trrp4</name>
</gene>